<accession>Q8E5V0</accession>
<organism>
    <name type="scientific">Streptococcus agalactiae serotype III (strain NEM316)</name>
    <dbReference type="NCBI Taxonomy" id="211110"/>
    <lineage>
        <taxon>Bacteria</taxon>
        <taxon>Bacillati</taxon>
        <taxon>Bacillota</taxon>
        <taxon>Bacilli</taxon>
        <taxon>Lactobacillales</taxon>
        <taxon>Streptococcaceae</taxon>
        <taxon>Streptococcus</taxon>
    </lineage>
</organism>
<dbReference type="EC" id="7.1.2.2" evidence="1"/>
<dbReference type="EMBL" id="AL766847">
    <property type="protein sequence ID" value="CAD46523.1"/>
    <property type="molecule type" value="Genomic_DNA"/>
</dbReference>
<dbReference type="RefSeq" id="WP_000996611.1">
    <property type="nucleotide sequence ID" value="NC_004368.1"/>
</dbReference>
<dbReference type="SMR" id="Q8E5V0"/>
<dbReference type="KEGG" id="san:atpA"/>
<dbReference type="eggNOG" id="COG0056">
    <property type="taxonomic scope" value="Bacteria"/>
</dbReference>
<dbReference type="HOGENOM" id="CLU_010091_2_1_9"/>
<dbReference type="Proteomes" id="UP000000823">
    <property type="component" value="Chromosome"/>
</dbReference>
<dbReference type="GO" id="GO:0005886">
    <property type="term" value="C:plasma membrane"/>
    <property type="evidence" value="ECO:0007669"/>
    <property type="project" value="UniProtKB-SubCell"/>
</dbReference>
<dbReference type="GO" id="GO:0045259">
    <property type="term" value="C:proton-transporting ATP synthase complex"/>
    <property type="evidence" value="ECO:0007669"/>
    <property type="project" value="UniProtKB-KW"/>
</dbReference>
<dbReference type="GO" id="GO:0043531">
    <property type="term" value="F:ADP binding"/>
    <property type="evidence" value="ECO:0007669"/>
    <property type="project" value="TreeGrafter"/>
</dbReference>
<dbReference type="GO" id="GO:0005524">
    <property type="term" value="F:ATP binding"/>
    <property type="evidence" value="ECO:0007669"/>
    <property type="project" value="UniProtKB-UniRule"/>
</dbReference>
<dbReference type="GO" id="GO:0046933">
    <property type="term" value="F:proton-transporting ATP synthase activity, rotational mechanism"/>
    <property type="evidence" value="ECO:0007669"/>
    <property type="project" value="UniProtKB-UniRule"/>
</dbReference>
<dbReference type="CDD" id="cd18113">
    <property type="entry name" value="ATP-synt_F1_alpha_C"/>
    <property type="match status" value="1"/>
</dbReference>
<dbReference type="CDD" id="cd18116">
    <property type="entry name" value="ATP-synt_F1_alpha_N"/>
    <property type="match status" value="1"/>
</dbReference>
<dbReference type="CDD" id="cd01132">
    <property type="entry name" value="F1-ATPase_alpha_CD"/>
    <property type="match status" value="1"/>
</dbReference>
<dbReference type="FunFam" id="1.20.150.20:FF:000001">
    <property type="entry name" value="ATP synthase subunit alpha"/>
    <property type="match status" value="1"/>
</dbReference>
<dbReference type="FunFam" id="2.40.30.20:FF:000001">
    <property type="entry name" value="ATP synthase subunit alpha"/>
    <property type="match status" value="1"/>
</dbReference>
<dbReference type="FunFam" id="3.40.50.300:FF:000002">
    <property type="entry name" value="ATP synthase subunit alpha"/>
    <property type="match status" value="1"/>
</dbReference>
<dbReference type="Gene3D" id="2.40.30.20">
    <property type="match status" value="1"/>
</dbReference>
<dbReference type="Gene3D" id="1.20.150.20">
    <property type="entry name" value="ATP synthase alpha/beta chain, C-terminal domain"/>
    <property type="match status" value="1"/>
</dbReference>
<dbReference type="Gene3D" id="3.40.50.300">
    <property type="entry name" value="P-loop containing nucleotide triphosphate hydrolases"/>
    <property type="match status" value="1"/>
</dbReference>
<dbReference type="HAMAP" id="MF_01346">
    <property type="entry name" value="ATP_synth_alpha_bact"/>
    <property type="match status" value="1"/>
</dbReference>
<dbReference type="InterPro" id="IPR023366">
    <property type="entry name" value="ATP_synth_asu-like_sf"/>
</dbReference>
<dbReference type="InterPro" id="IPR000793">
    <property type="entry name" value="ATP_synth_asu_C"/>
</dbReference>
<dbReference type="InterPro" id="IPR038376">
    <property type="entry name" value="ATP_synth_asu_C_sf"/>
</dbReference>
<dbReference type="InterPro" id="IPR033732">
    <property type="entry name" value="ATP_synth_F1_a_nt-bd_dom"/>
</dbReference>
<dbReference type="InterPro" id="IPR005294">
    <property type="entry name" value="ATP_synth_F1_asu"/>
</dbReference>
<dbReference type="InterPro" id="IPR004100">
    <property type="entry name" value="ATPase_F1/V1/A1_a/bsu_N"/>
</dbReference>
<dbReference type="InterPro" id="IPR036121">
    <property type="entry name" value="ATPase_F1/V1/A1_a/bsu_N_sf"/>
</dbReference>
<dbReference type="InterPro" id="IPR000194">
    <property type="entry name" value="ATPase_F1/V1/A1_a/bsu_nucl-bd"/>
</dbReference>
<dbReference type="InterPro" id="IPR027417">
    <property type="entry name" value="P-loop_NTPase"/>
</dbReference>
<dbReference type="NCBIfam" id="TIGR00962">
    <property type="entry name" value="atpA"/>
    <property type="match status" value="1"/>
</dbReference>
<dbReference type="NCBIfam" id="NF009884">
    <property type="entry name" value="PRK13343.1"/>
    <property type="match status" value="1"/>
</dbReference>
<dbReference type="PANTHER" id="PTHR48082">
    <property type="entry name" value="ATP SYNTHASE SUBUNIT ALPHA, MITOCHONDRIAL"/>
    <property type="match status" value="1"/>
</dbReference>
<dbReference type="PANTHER" id="PTHR48082:SF2">
    <property type="entry name" value="ATP SYNTHASE SUBUNIT ALPHA, MITOCHONDRIAL"/>
    <property type="match status" value="1"/>
</dbReference>
<dbReference type="Pfam" id="PF00006">
    <property type="entry name" value="ATP-synt_ab"/>
    <property type="match status" value="1"/>
</dbReference>
<dbReference type="Pfam" id="PF00306">
    <property type="entry name" value="ATP-synt_ab_C"/>
    <property type="match status" value="1"/>
</dbReference>
<dbReference type="Pfam" id="PF02874">
    <property type="entry name" value="ATP-synt_ab_N"/>
    <property type="match status" value="1"/>
</dbReference>
<dbReference type="PIRSF" id="PIRSF039088">
    <property type="entry name" value="F_ATPase_subunit_alpha"/>
    <property type="match status" value="1"/>
</dbReference>
<dbReference type="SUPFAM" id="SSF47917">
    <property type="entry name" value="C-terminal domain of alpha and beta subunits of F1 ATP synthase"/>
    <property type="match status" value="1"/>
</dbReference>
<dbReference type="SUPFAM" id="SSF50615">
    <property type="entry name" value="N-terminal domain of alpha and beta subunits of F1 ATP synthase"/>
    <property type="match status" value="1"/>
</dbReference>
<dbReference type="SUPFAM" id="SSF52540">
    <property type="entry name" value="P-loop containing nucleoside triphosphate hydrolases"/>
    <property type="match status" value="1"/>
</dbReference>
<comment type="function">
    <text evidence="1">Produces ATP from ADP in the presence of a proton gradient across the membrane. The alpha chain is a regulatory subunit.</text>
</comment>
<comment type="catalytic activity">
    <reaction evidence="1">
        <text>ATP + H2O + 4 H(+)(in) = ADP + phosphate + 5 H(+)(out)</text>
        <dbReference type="Rhea" id="RHEA:57720"/>
        <dbReference type="ChEBI" id="CHEBI:15377"/>
        <dbReference type="ChEBI" id="CHEBI:15378"/>
        <dbReference type="ChEBI" id="CHEBI:30616"/>
        <dbReference type="ChEBI" id="CHEBI:43474"/>
        <dbReference type="ChEBI" id="CHEBI:456216"/>
        <dbReference type="EC" id="7.1.2.2"/>
    </reaction>
</comment>
<comment type="subunit">
    <text evidence="1">F-type ATPases have 2 components, CF(1) - the catalytic core - and CF(0) - the membrane proton channel. CF(1) has five subunits: alpha(3), beta(3), gamma(1), delta(1), epsilon(1). CF(0) has three main subunits: a(1), b(2) and c(9-12). The alpha and beta chains form an alternating ring which encloses part of the gamma chain. CF(1) is attached to CF(0) by a central stalk formed by the gamma and epsilon chains, while a peripheral stalk is formed by the delta and b chains.</text>
</comment>
<comment type="subcellular location">
    <subcellularLocation>
        <location evidence="1">Cell membrane</location>
        <topology evidence="1">Peripheral membrane protein</topology>
    </subcellularLocation>
</comment>
<comment type="similarity">
    <text evidence="1">Belongs to the ATPase alpha/beta chains family.</text>
</comment>
<protein>
    <recommendedName>
        <fullName evidence="1">ATP synthase subunit alpha</fullName>
        <ecNumber evidence="1">7.1.2.2</ecNumber>
    </recommendedName>
    <alternativeName>
        <fullName evidence="1">ATP synthase F1 sector subunit alpha</fullName>
    </alternativeName>
    <alternativeName>
        <fullName evidence="1">F-ATPase subunit alpha</fullName>
    </alternativeName>
</protein>
<name>ATPA_STRA3</name>
<gene>
    <name evidence="1" type="primary">atpA</name>
    <name type="ordered locus">gbs0879</name>
</gene>
<keyword id="KW-0066">ATP synthesis</keyword>
<keyword id="KW-0067">ATP-binding</keyword>
<keyword id="KW-1003">Cell membrane</keyword>
<keyword id="KW-0139">CF(1)</keyword>
<keyword id="KW-0375">Hydrogen ion transport</keyword>
<keyword id="KW-0406">Ion transport</keyword>
<keyword id="KW-0472">Membrane</keyword>
<keyword id="KW-0547">Nucleotide-binding</keyword>
<keyword id="KW-1278">Translocase</keyword>
<keyword id="KW-0813">Transport</keyword>
<proteinExistence type="inferred from homology"/>
<reference key="1">
    <citation type="journal article" date="2002" name="Mol. Microbiol.">
        <title>Genome sequence of Streptococcus agalactiae, a pathogen causing invasive neonatal disease.</title>
        <authorList>
            <person name="Glaser P."/>
            <person name="Rusniok C."/>
            <person name="Buchrieser C."/>
            <person name="Chevalier F."/>
            <person name="Frangeul L."/>
            <person name="Msadek T."/>
            <person name="Zouine M."/>
            <person name="Couve E."/>
            <person name="Lalioui L."/>
            <person name="Poyart C."/>
            <person name="Trieu-Cuot P."/>
            <person name="Kunst F."/>
        </authorList>
    </citation>
    <scope>NUCLEOTIDE SEQUENCE [LARGE SCALE GENOMIC DNA]</scope>
    <source>
        <strain>NEM316</strain>
    </source>
</reference>
<sequence>MAINAQEISALIKKQIEDFQPNFDVTETGIVTYIGDGIARARGLDNAMSGELLEFSNGAYGMAQNLESNDVGIIILGDFSEIREGDVVKRTGKIMEVPVGEAMIGRVVNPLGQPVDGLGEIETTATRPVETPAPGVMQRKSVFEPLQTGLKAIDALVPIGRGQRELIIGDRQTGKTSVAIDAILNQKGQDMICIYVAIGQKESTVRTQVETLRKYGALDYTIVVTASASQPSPLLFIAPYAGVAMAEEFMYNGKHVLIVYDDLSKQAVAYRELSLLLRRPPGREAYPGDVFYLHSRLLERSAKLSDALGGGSITALPFIETQAGDISAYIATNVISITDGQIFLQENLFNSGIRPAIDAGSSVSRVGGAAQIKAMKRVAGTLRLDLASYRELEAFTQFGSDLDAATQAKLNRGRRTVEVLKQPLHKPLPVEKQVVILYALTHGFLDDVPVNDILAFEEALYDYFDAHYDNLFETIRTTKDLPEEAELDAAIQAFKDQSQFK</sequence>
<feature type="chain" id="PRO_0000238362" description="ATP synthase subunit alpha">
    <location>
        <begin position="1"/>
        <end position="501"/>
    </location>
</feature>
<feature type="binding site" evidence="1">
    <location>
        <begin position="169"/>
        <end position="176"/>
    </location>
    <ligand>
        <name>ATP</name>
        <dbReference type="ChEBI" id="CHEBI:30616"/>
    </ligand>
</feature>
<feature type="site" description="Required for activity" evidence="1">
    <location>
        <position position="362"/>
    </location>
</feature>
<evidence type="ECO:0000255" key="1">
    <source>
        <dbReference type="HAMAP-Rule" id="MF_01346"/>
    </source>
</evidence>